<organism>
    <name type="scientific">Mus musculus</name>
    <name type="common">Mouse</name>
    <dbReference type="NCBI Taxonomy" id="10090"/>
    <lineage>
        <taxon>Eukaryota</taxon>
        <taxon>Metazoa</taxon>
        <taxon>Chordata</taxon>
        <taxon>Craniata</taxon>
        <taxon>Vertebrata</taxon>
        <taxon>Euteleostomi</taxon>
        <taxon>Mammalia</taxon>
        <taxon>Eutheria</taxon>
        <taxon>Euarchontoglires</taxon>
        <taxon>Glires</taxon>
        <taxon>Rodentia</taxon>
        <taxon>Myomorpha</taxon>
        <taxon>Muroidea</taxon>
        <taxon>Muridae</taxon>
        <taxon>Murinae</taxon>
        <taxon>Mus</taxon>
        <taxon>Mus</taxon>
    </lineage>
</organism>
<accession>Q91YX0</accession>
<accession>Q3U5K5</accession>
<reference key="1">
    <citation type="journal article" date="2005" name="Science">
        <title>The transcriptional landscape of the mammalian genome.</title>
        <authorList>
            <person name="Carninci P."/>
            <person name="Kasukawa T."/>
            <person name="Katayama S."/>
            <person name="Gough J."/>
            <person name="Frith M.C."/>
            <person name="Maeda N."/>
            <person name="Oyama R."/>
            <person name="Ravasi T."/>
            <person name="Lenhard B."/>
            <person name="Wells C."/>
            <person name="Kodzius R."/>
            <person name="Shimokawa K."/>
            <person name="Bajic V.B."/>
            <person name="Brenner S.E."/>
            <person name="Batalov S."/>
            <person name="Forrest A.R."/>
            <person name="Zavolan M."/>
            <person name="Davis M.J."/>
            <person name="Wilming L.G."/>
            <person name="Aidinis V."/>
            <person name="Allen J.E."/>
            <person name="Ambesi-Impiombato A."/>
            <person name="Apweiler R."/>
            <person name="Aturaliya R.N."/>
            <person name="Bailey T.L."/>
            <person name="Bansal M."/>
            <person name="Baxter L."/>
            <person name="Beisel K.W."/>
            <person name="Bersano T."/>
            <person name="Bono H."/>
            <person name="Chalk A.M."/>
            <person name="Chiu K.P."/>
            <person name="Choudhary V."/>
            <person name="Christoffels A."/>
            <person name="Clutterbuck D.R."/>
            <person name="Crowe M.L."/>
            <person name="Dalla E."/>
            <person name="Dalrymple B.P."/>
            <person name="de Bono B."/>
            <person name="Della Gatta G."/>
            <person name="di Bernardo D."/>
            <person name="Down T."/>
            <person name="Engstrom P."/>
            <person name="Fagiolini M."/>
            <person name="Faulkner G."/>
            <person name="Fletcher C.F."/>
            <person name="Fukushima T."/>
            <person name="Furuno M."/>
            <person name="Futaki S."/>
            <person name="Gariboldi M."/>
            <person name="Georgii-Hemming P."/>
            <person name="Gingeras T.R."/>
            <person name="Gojobori T."/>
            <person name="Green R.E."/>
            <person name="Gustincich S."/>
            <person name="Harbers M."/>
            <person name="Hayashi Y."/>
            <person name="Hensch T.K."/>
            <person name="Hirokawa N."/>
            <person name="Hill D."/>
            <person name="Huminiecki L."/>
            <person name="Iacono M."/>
            <person name="Ikeo K."/>
            <person name="Iwama A."/>
            <person name="Ishikawa T."/>
            <person name="Jakt M."/>
            <person name="Kanapin A."/>
            <person name="Katoh M."/>
            <person name="Kawasawa Y."/>
            <person name="Kelso J."/>
            <person name="Kitamura H."/>
            <person name="Kitano H."/>
            <person name="Kollias G."/>
            <person name="Krishnan S.P."/>
            <person name="Kruger A."/>
            <person name="Kummerfeld S.K."/>
            <person name="Kurochkin I.V."/>
            <person name="Lareau L.F."/>
            <person name="Lazarevic D."/>
            <person name="Lipovich L."/>
            <person name="Liu J."/>
            <person name="Liuni S."/>
            <person name="McWilliam S."/>
            <person name="Madan Babu M."/>
            <person name="Madera M."/>
            <person name="Marchionni L."/>
            <person name="Matsuda H."/>
            <person name="Matsuzawa S."/>
            <person name="Miki H."/>
            <person name="Mignone F."/>
            <person name="Miyake S."/>
            <person name="Morris K."/>
            <person name="Mottagui-Tabar S."/>
            <person name="Mulder N."/>
            <person name="Nakano N."/>
            <person name="Nakauchi H."/>
            <person name="Ng P."/>
            <person name="Nilsson R."/>
            <person name="Nishiguchi S."/>
            <person name="Nishikawa S."/>
            <person name="Nori F."/>
            <person name="Ohara O."/>
            <person name="Okazaki Y."/>
            <person name="Orlando V."/>
            <person name="Pang K.C."/>
            <person name="Pavan W.J."/>
            <person name="Pavesi G."/>
            <person name="Pesole G."/>
            <person name="Petrovsky N."/>
            <person name="Piazza S."/>
            <person name="Reed J."/>
            <person name="Reid J.F."/>
            <person name="Ring B.Z."/>
            <person name="Ringwald M."/>
            <person name="Rost B."/>
            <person name="Ruan Y."/>
            <person name="Salzberg S.L."/>
            <person name="Sandelin A."/>
            <person name="Schneider C."/>
            <person name="Schoenbach C."/>
            <person name="Sekiguchi K."/>
            <person name="Semple C.A."/>
            <person name="Seno S."/>
            <person name="Sessa L."/>
            <person name="Sheng Y."/>
            <person name="Shibata Y."/>
            <person name="Shimada H."/>
            <person name="Shimada K."/>
            <person name="Silva D."/>
            <person name="Sinclair B."/>
            <person name="Sperling S."/>
            <person name="Stupka E."/>
            <person name="Sugiura K."/>
            <person name="Sultana R."/>
            <person name="Takenaka Y."/>
            <person name="Taki K."/>
            <person name="Tammoja K."/>
            <person name="Tan S.L."/>
            <person name="Tang S."/>
            <person name="Taylor M.S."/>
            <person name="Tegner J."/>
            <person name="Teichmann S.A."/>
            <person name="Ueda H.R."/>
            <person name="van Nimwegen E."/>
            <person name="Verardo R."/>
            <person name="Wei C.L."/>
            <person name="Yagi K."/>
            <person name="Yamanishi H."/>
            <person name="Zabarovsky E."/>
            <person name="Zhu S."/>
            <person name="Zimmer A."/>
            <person name="Hide W."/>
            <person name="Bult C."/>
            <person name="Grimmond S.M."/>
            <person name="Teasdale R.D."/>
            <person name="Liu E.T."/>
            <person name="Brusic V."/>
            <person name="Quackenbush J."/>
            <person name="Wahlestedt C."/>
            <person name="Mattick J.S."/>
            <person name="Hume D.A."/>
            <person name="Kai C."/>
            <person name="Sasaki D."/>
            <person name="Tomaru Y."/>
            <person name="Fukuda S."/>
            <person name="Kanamori-Katayama M."/>
            <person name="Suzuki M."/>
            <person name="Aoki J."/>
            <person name="Arakawa T."/>
            <person name="Iida J."/>
            <person name="Imamura K."/>
            <person name="Itoh M."/>
            <person name="Kato T."/>
            <person name="Kawaji H."/>
            <person name="Kawagashira N."/>
            <person name="Kawashima T."/>
            <person name="Kojima M."/>
            <person name="Kondo S."/>
            <person name="Konno H."/>
            <person name="Nakano K."/>
            <person name="Ninomiya N."/>
            <person name="Nishio T."/>
            <person name="Okada M."/>
            <person name="Plessy C."/>
            <person name="Shibata K."/>
            <person name="Shiraki T."/>
            <person name="Suzuki S."/>
            <person name="Tagami M."/>
            <person name="Waki K."/>
            <person name="Watahiki A."/>
            <person name="Okamura-Oho Y."/>
            <person name="Suzuki H."/>
            <person name="Kawai J."/>
            <person name="Hayashizaki Y."/>
        </authorList>
    </citation>
    <scope>NUCLEOTIDE SEQUENCE [LARGE SCALE MRNA]</scope>
    <source>
        <strain>C57BL/6J</strain>
        <strain>NOD</strain>
        <tissue>Bone marrow</tissue>
    </source>
</reference>
<reference key="2">
    <citation type="journal article" date="2009" name="PLoS Biol.">
        <title>Lineage-specific biology revealed by a finished genome assembly of the mouse.</title>
        <authorList>
            <person name="Church D.M."/>
            <person name="Goodstadt L."/>
            <person name="Hillier L.W."/>
            <person name="Zody M.C."/>
            <person name="Goldstein S."/>
            <person name="She X."/>
            <person name="Bult C.J."/>
            <person name="Agarwala R."/>
            <person name="Cherry J.L."/>
            <person name="DiCuccio M."/>
            <person name="Hlavina W."/>
            <person name="Kapustin Y."/>
            <person name="Meric P."/>
            <person name="Maglott D."/>
            <person name="Birtle Z."/>
            <person name="Marques A.C."/>
            <person name="Graves T."/>
            <person name="Zhou S."/>
            <person name="Teague B."/>
            <person name="Potamousis K."/>
            <person name="Churas C."/>
            <person name="Place M."/>
            <person name="Herschleb J."/>
            <person name="Runnheim R."/>
            <person name="Forrest D."/>
            <person name="Amos-Landgraf J."/>
            <person name="Schwartz D.C."/>
            <person name="Cheng Z."/>
            <person name="Lindblad-Toh K."/>
            <person name="Eichler E.E."/>
            <person name="Ponting C.P."/>
        </authorList>
    </citation>
    <scope>NUCLEOTIDE SEQUENCE [LARGE SCALE GENOMIC DNA]</scope>
    <source>
        <strain>C57BL/6J</strain>
    </source>
</reference>
<reference key="3">
    <citation type="journal article" date="2004" name="Genome Res.">
        <title>The status, quality, and expansion of the NIH full-length cDNA project: the Mammalian Gene Collection (MGC).</title>
        <authorList>
            <consortium name="The MGC Project Team"/>
        </authorList>
    </citation>
    <scope>NUCLEOTIDE SEQUENCE [LARGE SCALE MRNA]</scope>
    <source>
        <strain>129</strain>
        <tissue>Brain</tissue>
        <tissue>Mammary tumor</tissue>
    </source>
</reference>
<reference key="4">
    <citation type="journal article" date="2009" name="Nat. Immunol.">
        <title>Themis controls thymocyte selection through regulation of T cell antigen receptor-mediated signaling.</title>
        <authorList>
            <person name="Fu G."/>
            <person name="Vallee S."/>
            <person name="Rybakin V."/>
            <person name="McGuire M.V."/>
            <person name="Ampudia J."/>
            <person name="Brockmeyer C."/>
            <person name="Salek M."/>
            <person name="Fallen P.R."/>
            <person name="Hoerter J.A.H."/>
            <person name="Munshi A."/>
            <person name="Huang Y.H."/>
            <person name="Hu J."/>
            <person name="Fox H.S."/>
            <person name="Sauer K."/>
            <person name="Acuto O."/>
            <person name="Gascoigne N.R.J."/>
        </authorList>
    </citation>
    <scope>TISSUE SPECIFICITY</scope>
</reference>
<reference key="5">
    <citation type="journal article" date="2009" name="Nat. Immunol.">
        <title>Themis is a member of a new metazoan gene family and is required for the completion of thymocyte positive selection.</title>
        <authorList>
            <person name="Johnson A.L."/>
            <person name="Aravind L."/>
            <person name="Shulzhenko N."/>
            <person name="Morgun A."/>
            <person name="Choi S.-Y."/>
            <person name="Crockford T.L."/>
            <person name="Lambe T."/>
            <person name="Domaschenz H."/>
            <person name="Kucharska E.M."/>
            <person name="Zheng L."/>
            <person name="Vinuesa C.G."/>
            <person name="Lenardo M.J."/>
            <person name="Goodnow C.C."/>
            <person name="Cornall R.J."/>
            <person name="Schwartz R.H."/>
        </authorList>
    </citation>
    <scope>IDENTIFICATION</scope>
</reference>
<reference key="6">
    <citation type="journal article" date="2010" name="Cell">
        <title>A tissue-specific atlas of mouse protein phosphorylation and expression.</title>
        <authorList>
            <person name="Huttlin E.L."/>
            <person name="Jedrychowski M.P."/>
            <person name="Elias J.E."/>
            <person name="Goswami T."/>
            <person name="Rad R."/>
            <person name="Beausoleil S.A."/>
            <person name="Villen J."/>
            <person name="Haas W."/>
            <person name="Sowa M.E."/>
            <person name="Gygi S.P."/>
        </authorList>
    </citation>
    <scope>IDENTIFICATION BY MASS SPECTROMETRY [LARGE SCALE ANALYSIS]</scope>
    <source>
        <tissue>Spleen</tissue>
    </source>
</reference>
<reference key="7">
    <citation type="journal article" date="2010" name="PLoS ONE">
        <title>Themis2/ICB1 is a signaling scaffold that selectively regulates macrophage Toll-like receptor signaling and cytokine production.</title>
        <authorList>
            <person name="Peirce M.J."/>
            <person name="Brook M."/>
            <person name="Morrice N."/>
            <person name="Snelgrove R."/>
            <person name="Begum S."/>
            <person name="Lanfrancotti A."/>
            <person name="Notley C."/>
            <person name="Hussell T."/>
            <person name="Cope A.P."/>
            <person name="Wait R."/>
        </authorList>
    </citation>
    <scope>FUNCTION</scope>
    <scope>INTERACTION WITH GRB2; LYN AND VAV1</scope>
    <scope>DEVELOPMENTAL STAGE</scope>
    <scope>PHOSPHORYLATION AT TYR-660</scope>
    <scope>MUTAGENESIS OF TYR-660</scope>
</reference>
<reference key="8">
    <citation type="journal article" date="2012" name="J. Immunol.">
        <title>Interchangeability of Themis1 and Themis2 in thymocyte development reveals two related proteins with conserved molecular function.</title>
        <authorList>
            <person name="Lesourne R."/>
            <person name="Zvezdova E."/>
            <person name="Song K.D."/>
            <person name="El-Khoury D."/>
            <person name="Uehara S."/>
            <person name="Barr V.A."/>
            <person name="Samelson L.E."/>
            <person name="Love P.E."/>
        </authorList>
    </citation>
    <scope>SUBCELLULAR LOCATION</scope>
    <scope>PHOSPHORYLATION</scope>
    <scope>INTERACTION WITH LAT; GRB2 AND VAV1</scope>
</reference>
<reference key="9">
    <citation type="journal article" date="2014" name="J. Immunol.">
        <title>Themis2 is not required for B cell development, activation, and antibody responses.</title>
        <authorList>
            <person name="Hartweger H."/>
            <person name="Schweighoffer E."/>
            <person name="Davidson S."/>
            <person name="Peirce M.J."/>
            <person name="Wack A."/>
            <person name="Tybulewicz V.L."/>
        </authorList>
    </citation>
    <scope>TISSUE SPECIFICITY</scope>
    <scope>DISRUPTION PHENOTYPE</scope>
    <scope>FUNCTION</scope>
</reference>
<reference key="10">
    <citation type="journal article" date="2017" name="Nat. Immunol.">
        <title>Themis2 lowers the threshold for B cell activation during positive selection.</title>
        <authorList>
            <person name="Cheng D."/>
            <person name="Deobagkar-Lele M."/>
            <person name="Zvezdova E."/>
            <person name="Choi S."/>
            <person name="Uehara S."/>
            <person name="Baup D."/>
            <person name="Bennett S.C."/>
            <person name="Bull K.R."/>
            <person name="Crockford T.L."/>
            <person name="Ferry H."/>
            <person name="Warzecha C."/>
            <person name="Marcellin M."/>
            <person name="de Peredo A.G."/>
            <person name="Lesourne R."/>
            <person name="Anzilotti C."/>
            <person name="Love P.E."/>
            <person name="Cornall R.J."/>
        </authorList>
    </citation>
    <scope>TISSUE SPECIFICITY</scope>
    <scope>IDENTIFICATION BY MASS SPECTROMETRY</scope>
    <scope>FUNCTION</scope>
    <scope>INTERACTION WITH GRB2; LYN AND PLCG2</scope>
</reference>
<feature type="chain" id="PRO_0000084144" description="Protein THEMIS2">
    <location>
        <begin position="1"/>
        <end position="663"/>
    </location>
</feature>
<feature type="region of interest" description="CABIT 1">
    <location>
        <begin position="2"/>
        <end position="237"/>
    </location>
</feature>
<feature type="region of interest" description="CABIT 2">
    <location>
        <begin position="238"/>
        <end position="515"/>
    </location>
</feature>
<feature type="region of interest" description="Disordered" evidence="2">
    <location>
        <begin position="545"/>
        <end position="663"/>
    </location>
</feature>
<feature type="compositionally biased region" description="Polar residues" evidence="2">
    <location>
        <begin position="559"/>
        <end position="577"/>
    </location>
</feature>
<feature type="compositionally biased region" description="Polar residues" evidence="2">
    <location>
        <begin position="621"/>
        <end position="641"/>
    </location>
</feature>
<feature type="compositionally biased region" description="Acidic residues" evidence="2">
    <location>
        <begin position="653"/>
        <end position="663"/>
    </location>
</feature>
<feature type="modified residue" description="Phosphothreonine" evidence="1">
    <location>
        <position position="596"/>
    </location>
</feature>
<feature type="modified residue" description="Phosphotyrosine" evidence="4">
    <location>
        <position position="660"/>
    </location>
</feature>
<feature type="mutagenesis site" description="Drastic decrease in GRB2-binding, but no effect on VAV-binding; when associated with A-555. Partial loss of enhancement of LPS-induced TNF production; when associated with A-555.">
    <original>P</original>
    <variation>A</variation>
    <location>
        <position position="552"/>
    </location>
</feature>
<feature type="mutagenesis site" description="Drastic decrease in GRB2-binding, but no effect on VAV-binding; when associated with A-552. Partial loss of enhancement of LPS-induced TNF production; when associated with A-552.">
    <original>P</original>
    <variation>A</variation>
    <location>
        <position position="555"/>
    </location>
</feature>
<feature type="mutagenesis site" description="Loss of phosphorylation. Loss of LYN-binding. Slight decrease in GRB2-binding. No effect on VAV-binding. Partial loss of enhancement of LPS-induced TNF production." evidence="4">
    <original>Y</original>
    <variation>F</variation>
    <location>
        <position position="660"/>
    </location>
</feature>
<sequence>MEPVPLQDFVSGLDPTSLPRVLRVCSGVYFEGSVYELFGNECCLSTGDLIKVTHVQLQKVVCEYPETGQTLELNPNFTGLFSPLTSLRSYRTLEDLVSAMPQNSTRWPIYFKSTQRIVTKASVVPEDQPLRLEAVEIHHGIRYARCVQVSKTKELLHLPLSQKGPFWRCKPSAPQTLHQILQDPALKDLTLSCPSLPWNSVILKPQYMLQAIMHMRSSIVKIPSTLEVEVEDVTASSQHIHFFKPLRLSEVLAGGGPFPLTTEILEVPEGPPVFLSPWVSFLRKGQRLCIYGPASPSWRVVASSKSRKVPRYFMLSGAYQGKLKRRPREFSTAYDLLGALQPGRPLRVVATKDCDGNEEENPDFSFLAVGDRLEVLRSGQVCGTKGQDIDVLVCQRLSEQSGEEEEDLEEIEDEAEDKEQILLPLYLSGSFVEEVNDSRRYNLVDLTAQYSLPCEVKVVTKDTRHPTDPLASFPGLRLEEKLTEPFLVVSLDSQPEMCFEIPPRWLDLTVVEAEGQPAQVARPLSIAPVEELSEAFYYSLRKLPASESQAPPPRPPKSQGINKKQQNIQSCKESSVKPQVVEPQKSCPQPQLKAKTLEALPKNKSNVYSKISVHKKDRKPNPQTQNSVLSMKPKTSSSLGKHSTMESHLLPDPDMDDHDYEEI</sequence>
<protein>
    <recommendedName>
        <fullName evidence="9">Protein THEMIS2</fullName>
    </recommendedName>
    <alternativeName>
        <fullName evidence="8">Induced by contact to basement membrane 1 protein</fullName>
        <shortName>Protein ICB-1</shortName>
    </alternativeName>
    <alternativeName>
        <fullName>Thymocyte-expressed molecule involved in selection protein 2</fullName>
    </alternativeName>
</protein>
<gene>
    <name evidence="10" type="primary">Themis2</name>
    <name evidence="8" type="synonym">Icb1</name>
</gene>
<evidence type="ECO:0000250" key="1">
    <source>
        <dbReference type="UniProtKB" id="Q5TEJ8"/>
    </source>
</evidence>
<evidence type="ECO:0000256" key="2">
    <source>
        <dbReference type="SAM" id="MobiDB-lite"/>
    </source>
</evidence>
<evidence type="ECO:0000269" key="3">
    <source>
    </source>
</evidence>
<evidence type="ECO:0000269" key="4">
    <source>
    </source>
</evidence>
<evidence type="ECO:0000269" key="5">
    <source>
    </source>
</evidence>
<evidence type="ECO:0000269" key="6">
    <source>
    </source>
</evidence>
<evidence type="ECO:0000269" key="7">
    <source>
    </source>
</evidence>
<evidence type="ECO:0000303" key="8">
    <source>
    </source>
</evidence>
<evidence type="ECO:0000305" key="9"/>
<evidence type="ECO:0000312" key="10">
    <source>
        <dbReference type="MGI" id="MGI:2446213"/>
    </source>
</evidence>
<proteinExistence type="evidence at protein level"/>
<name>THMS2_MOUSE</name>
<comment type="function">
    <text evidence="4 7">May constitute a control point in macrophage inflammatory response, promoting LPS-induced TLR4-mediated TNF production (PubMed:20644716). Determines the threshold for activation of B cells by low-affinity and low-avidity ligands via PLCG2 activation and its downstream pathways (PubMed:27992403).</text>
</comment>
<comment type="subunit">
    <text evidence="4 5 7">Interacts with VAV1 (PubMed:20644716, PubMed:22732588). Interacts with LAT (PubMed:22732588). Interacts constitutively with GRB2, LYN and PLCG2; these interactions increase the activation of PLCG2 and its downstream pathways following B cell receptor stimulation (PubMed:20644716, PubMed:22732588, PubMed:27992403).</text>
</comment>
<comment type="subcellular location">
    <subcellularLocation>
        <location evidence="5">Nucleus</location>
    </subcellularLocation>
    <subcellularLocation>
        <location evidence="5">Cytoplasm</location>
    </subcellularLocation>
</comment>
<comment type="tissue specificity">
    <text evidence="3 6 7">Expressed in both developing and mature B-cells with high expression in immature, follicular and B1 B cells (PubMed:19597499, PubMed:24907343, PubMed:27992403). Also expressed in macrophages and dendritic cells (PubMed:19597499). Down-regulated in splenocytes of mice developing arthritis in a collagen-induced model, not in those of mice failing to develop the disease. Transiently down-regulated in splenocytes of mice infected with influenza virus (PubMed:19597499).</text>
</comment>
<comment type="developmental stage">
    <text evidence="4">Up-regulated during the differentiation of bone marrow precursors into macrophages.</text>
</comment>
<comment type="induction">
    <text>Up-regulated by pro-inflammatory stimuli, such as IFNG (at protein level). Down-regulated by anti-inflammatory stimuli, such as TGFB1 and dexamethasone (at protein level).</text>
</comment>
<comment type="PTM">
    <text evidence="4">Phosphorylation at Tyr-660 is induced by LPS (PubMed:20644716). Phosphorylated by Src kinases (Lck or Fyn) following BCR engagement (PubMed:20644716).</text>
</comment>
<comment type="disruption phenotype">
    <text evidence="6">Homozygous knockout mice for Themis2 are viable and produced at the expected ratio (PubMed:24907343). Mice show normal B cell development, activation, or Ab responses (PubMed:24907343).</text>
</comment>
<comment type="similarity">
    <text evidence="9">Belongs to the themis family.</text>
</comment>
<comment type="sequence caution" evidence="9">
    <conflict type="erroneous initiation">
        <sequence resource="EMBL-CDS" id="AAH13712"/>
    </conflict>
    <text>Extended N-terminus.</text>
</comment>
<dbReference type="EMBL" id="AK150471">
    <property type="protein sequence ID" value="BAE29588.1"/>
    <property type="molecule type" value="mRNA"/>
</dbReference>
<dbReference type="EMBL" id="AK153536">
    <property type="protein sequence ID" value="BAE32073.1"/>
    <property type="molecule type" value="mRNA"/>
</dbReference>
<dbReference type="EMBL" id="AK155536">
    <property type="protein sequence ID" value="BAE33313.1"/>
    <property type="molecule type" value="mRNA"/>
</dbReference>
<dbReference type="EMBL" id="AK171009">
    <property type="protein sequence ID" value="BAE42180.1"/>
    <property type="molecule type" value="mRNA"/>
</dbReference>
<dbReference type="EMBL" id="AL627130">
    <property type="status" value="NOT_ANNOTATED_CDS"/>
    <property type="molecule type" value="Genomic_DNA"/>
</dbReference>
<dbReference type="EMBL" id="AL671190">
    <property type="status" value="NOT_ANNOTATED_CDS"/>
    <property type="molecule type" value="Genomic_DNA"/>
</dbReference>
<dbReference type="EMBL" id="BC013712">
    <property type="protein sequence ID" value="AAH13712.1"/>
    <property type="status" value="ALT_INIT"/>
    <property type="molecule type" value="mRNA"/>
</dbReference>
<dbReference type="EMBL" id="BC151122">
    <property type="protein sequence ID" value="AAI51123.1"/>
    <property type="molecule type" value="mRNA"/>
</dbReference>
<dbReference type="EMBL" id="BC151126">
    <property type="protein sequence ID" value="AAI51127.1"/>
    <property type="molecule type" value="mRNA"/>
</dbReference>
<dbReference type="CCDS" id="CCDS18735.1"/>
<dbReference type="RefSeq" id="NP_001028480.1">
    <property type="nucleotide sequence ID" value="NM_001033308.2"/>
</dbReference>
<dbReference type="BioGRID" id="231027">
    <property type="interactions" value="2"/>
</dbReference>
<dbReference type="FunCoup" id="Q91YX0">
    <property type="interactions" value="1500"/>
</dbReference>
<dbReference type="STRING" id="10090.ENSMUSP00000036945"/>
<dbReference type="iPTMnet" id="Q91YX0"/>
<dbReference type="PhosphoSitePlus" id="Q91YX0"/>
<dbReference type="jPOST" id="Q91YX0"/>
<dbReference type="PaxDb" id="10090-ENSMUSP00000036945"/>
<dbReference type="PeptideAtlas" id="Q91YX0"/>
<dbReference type="ProteomicsDB" id="259383"/>
<dbReference type="Antibodypedia" id="30867">
    <property type="antibodies" value="106 antibodies from 21 providers"/>
</dbReference>
<dbReference type="Ensembl" id="ENSMUST00000045154.6">
    <property type="protein sequence ID" value="ENSMUSP00000036945.6"/>
    <property type="gene ID" value="ENSMUSG00000037731.6"/>
</dbReference>
<dbReference type="GeneID" id="230787"/>
<dbReference type="KEGG" id="mmu:230787"/>
<dbReference type="UCSC" id="uc008vbv.1">
    <property type="organism name" value="mouse"/>
</dbReference>
<dbReference type="AGR" id="MGI:2446213"/>
<dbReference type="CTD" id="9473"/>
<dbReference type="MGI" id="MGI:2446213">
    <property type="gene designation" value="Themis2"/>
</dbReference>
<dbReference type="VEuPathDB" id="HostDB:ENSMUSG00000037731"/>
<dbReference type="eggNOG" id="ENOG502QSJR">
    <property type="taxonomic scope" value="Eukaryota"/>
</dbReference>
<dbReference type="GeneTree" id="ENSGT00530000063770"/>
<dbReference type="HOGENOM" id="CLU_022319_0_0_1"/>
<dbReference type="InParanoid" id="Q91YX0"/>
<dbReference type="OMA" id="RPEYEVQ"/>
<dbReference type="OrthoDB" id="9030353at2759"/>
<dbReference type="PhylomeDB" id="Q91YX0"/>
<dbReference type="TreeFam" id="TF333479"/>
<dbReference type="BioGRID-ORCS" id="230787">
    <property type="hits" value="1 hit in 77 CRISPR screens"/>
</dbReference>
<dbReference type="ChiTaRS" id="Themis2">
    <property type="organism name" value="mouse"/>
</dbReference>
<dbReference type="PRO" id="PR:Q91YX0"/>
<dbReference type="Proteomes" id="UP000000589">
    <property type="component" value="Chromosome 4"/>
</dbReference>
<dbReference type="RNAct" id="Q91YX0">
    <property type="molecule type" value="protein"/>
</dbReference>
<dbReference type="Bgee" id="ENSMUSG00000037731">
    <property type="expression patterns" value="Expressed in granulocyte and 117 other cell types or tissues"/>
</dbReference>
<dbReference type="GO" id="GO:0005737">
    <property type="term" value="C:cytoplasm"/>
    <property type="evidence" value="ECO:0000314"/>
    <property type="project" value="MGI"/>
</dbReference>
<dbReference type="GO" id="GO:0005634">
    <property type="term" value="C:nucleus"/>
    <property type="evidence" value="ECO:0000314"/>
    <property type="project" value="MGI"/>
</dbReference>
<dbReference type="GO" id="GO:0006954">
    <property type="term" value="P:inflammatory response"/>
    <property type="evidence" value="ECO:0007669"/>
    <property type="project" value="UniProtKB-KW"/>
</dbReference>
<dbReference type="GO" id="GO:0050864">
    <property type="term" value="P:regulation of B cell activation"/>
    <property type="evidence" value="ECO:0000315"/>
    <property type="project" value="UniProtKB"/>
</dbReference>
<dbReference type="GO" id="GO:0050852">
    <property type="term" value="P:T cell receptor signaling pathway"/>
    <property type="evidence" value="ECO:0000315"/>
    <property type="project" value="MGI"/>
</dbReference>
<dbReference type="InterPro" id="IPR025946">
    <property type="entry name" value="CABIT_dom"/>
</dbReference>
<dbReference type="InterPro" id="IPR039671">
    <property type="entry name" value="THEMIS"/>
</dbReference>
<dbReference type="PANTHER" id="PTHR15215">
    <property type="entry name" value="CABIT DOMAIN-CONTAINING PROTEIN"/>
    <property type="match status" value="1"/>
</dbReference>
<dbReference type="PANTHER" id="PTHR15215:SF2">
    <property type="entry name" value="PROTEIN THEMIS2"/>
    <property type="match status" value="1"/>
</dbReference>
<dbReference type="Pfam" id="PF12736">
    <property type="entry name" value="CABIT"/>
    <property type="match status" value="2"/>
</dbReference>
<keyword id="KW-0963">Cytoplasm</keyword>
<keyword id="KW-0391">Immunity</keyword>
<keyword id="KW-0395">Inflammatory response</keyword>
<keyword id="KW-0539">Nucleus</keyword>
<keyword id="KW-0597">Phosphoprotein</keyword>
<keyword id="KW-1185">Reference proteome</keyword>